<reference key="1">
    <citation type="journal article" date="2004" name="Nat. Genet.">
        <title>Complete sequencing and characterization of 21,243 full-length human cDNAs.</title>
        <authorList>
            <person name="Ota T."/>
            <person name="Suzuki Y."/>
            <person name="Nishikawa T."/>
            <person name="Otsuki T."/>
            <person name="Sugiyama T."/>
            <person name="Irie R."/>
            <person name="Wakamatsu A."/>
            <person name="Hayashi K."/>
            <person name="Sato H."/>
            <person name="Nagai K."/>
            <person name="Kimura K."/>
            <person name="Makita H."/>
            <person name="Sekine M."/>
            <person name="Obayashi M."/>
            <person name="Nishi T."/>
            <person name="Shibahara T."/>
            <person name="Tanaka T."/>
            <person name="Ishii S."/>
            <person name="Yamamoto J."/>
            <person name="Saito K."/>
            <person name="Kawai Y."/>
            <person name="Isono Y."/>
            <person name="Nakamura Y."/>
            <person name="Nagahari K."/>
            <person name="Murakami K."/>
            <person name="Yasuda T."/>
            <person name="Iwayanagi T."/>
            <person name="Wagatsuma M."/>
            <person name="Shiratori A."/>
            <person name="Sudo H."/>
            <person name="Hosoiri T."/>
            <person name="Kaku Y."/>
            <person name="Kodaira H."/>
            <person name="Kondo H."/>
            <person name="Sugawara M."/>
            <person name="Takahashi M."/>
            <person name="Kanda K."/>
            <person name="Yokoi T."/>
            <person name="Furuya T."/>
            <person name="Kikkawa E."/>
            <person name="Omura Y."/>
            <person name="Abe K."/>
            <person name="Kamihara K."/>
            <person name="Katsuta N."/>
            <person name="Sato K."/>
            <person name="Tanikawa M."/>
            <person name="Yamazaki M."/>
            <person name="Ninomiya K."/>
            <person name="Ishibashi T."/>
            <person name="Yamashita H."/>
            <person name="Murakawa K."/>
            <person name="Fujimori K."/>
            <person name="Tanai H."/>
            <person name="Kimata M."/>
            <person name="Watanabe M."/>
            <person name="Hiraoka S."/>
            <person name="Chiba Y."/>
            <person name="Ishida S."/>
            <person name="Ono Y."/>
            <person name="Takiguchi S."/>
            <person name="Watanabe S."/>
            <person name="Yosida M."/>
            <person name="Hotuta T."/>
            <person name="Kusano J."/>
            <person name="Kanehori K."/>
            <person name="Takahashi-Fujii A."/>
            <person name="Hara H."/>
            <person name="Tanase T.-O."/>
            <person name="Nomura Y."/>
            <person name="Togiya S."/>
            <person name="Komai F."/>
            <person name="Hara R."/>
            <person name="Takeuchi K."/>
            <person name="Arita M."/>
            <person name="Imose N."/>
            <person name="Musashino K."/>
            <person name="Yuuki H."/>
            <person name="Oshima A."/>
            <person name="Sasaki N."/>
            <person name="Aotsuka S."/>
            <person name="Yoshikawa Y."/>
            <person name="Matsunawa H."/>
            <person name="Ichihara T."/>
            <person name="Shiohata N."/>
            <person name="Sano S."/>
            <person name="Moriya S."/>
            <person name="Momiyama H."/>
            <person name="Satoh N."/>
            <person name="Takami S."/>
            <person name="Terashima Y."/>
            <person name="Suzuki O."/>
            <person name="Nakagawa S."/>
            <person name="Senoh A."/>
            <person name="Mizoguchi H."/>
            <person name="Goto Y."/>
            <person name="Shimizu F."/>
            <person name="Wakebe H."/>
            <person name="Hishigaki H."/>
            <person name="Watanabe T."/>
            <person name="Sugiyama A."/>
            <person name="Takemoto M."/>
            <person name="Kawakami B."/>
            <person name="Yamazaki M."/>
            <person name="Watanabe K."/>
            <person name="Kumagai A."/>
            <person name="Itakura S."/>
            <person name="Fukuzumi Y."/>
            <person name="Fujimori Y."/>
            <person name="Komiyama M."/>
            <person name="Tashiro H."/>
            <person name="Tanigami A."/>
            <person name="Fujiwara T."/>
            <person name="Ono T."/>
            <person name="Yamada K."/>
            <person name="Fujii Y."/>
            <person name="Ozaki K."/>
            <person name="Hirao M."/>
            <person name="Ohmori Y."/>
            <person name="Kawabata A."/>
            <person name="Hikiji T."/>
            <person name="Kobatake N."/>
            <person name="Inagaki H."/>
            <person name="Ikema Y."/>
            <person name="Okamoto S."/>
            <person name="Okitani R."/>
            <person name="Kawakami T."/>
            <person name="Noguchi S."/>
            <person name="Itoh T."/>
            <person name="Shigeta K."/>
            <person name="Senba T."/>
            <person name="Matsumura K."/>
            <person name="Nakajima Y."/>
            <person name="Mizuno T."/>
            <person name="Morinaga M."/>
            <person name="Sasaki M."/>
            <person name="Togashi T."/>
            <person name="Oyama M."/>
            <person name="Hata H."/>
            <person name="Watanabe M."/>
            <person name="Komatsu T."/>
            <person name="Mizushima-Sugano J."/>
            <person name="Satoh T."/>
            <person name="Shirai Y."/>
            <person name="Takahashi Y."/>
            <person name="Nakagawa K."/>
            <person name="Okumura K."/>
            <person name="Nagase T."/>
            <person name="Nomura N."/>
            <person name="Kikuchi H."/>
            <person name="Masuho Y."/>
            <person name="Yamashita R."/>
            <person name="Nakai K."/>
            <person name="Yada T."/>
            <person name="Nakamura Y."/>
            <person name="Ohara O."/>
            <person name="Isogai T."/>
            <person name="Sugano S."/>
        </authorList>
    </citation>
    <scope>NUCLEOTIDE SEQUENCE [LARGE SCALE MRNA] (ISOFORM 1)</scope>
    <source>
        <tissue>Mesangial cell</tissue>
    </source>
</reference>
<reference key="2">
    <citation type="journal article" date="2007" name="BMC Genomics">
        <title>The full-ORF clone resource of the German cDNA consortium.</title>
        <authorList>
            <person name="Bechtel S."/>
            <person name="Rosenfelder H."/>
            <person name="Duda A."/>
            <person name="Schmidt C.P."/>
            <person name="Ernst U."/>
            <person name="Wellenreuther R."/>
            <person name="Mehrle A."/>
            <person name="Schuster C."/>
            <person name="Bahr A."/>
            <person name="Bloecker H."/>
            <person name="Heubner D."/>
            <person name="Hoerlein A."/>
            <person name="Michel G."/>
            <person name="Wedler H."/>
            <person name="Koehrer K."/>
            <person name="Ottenwaelder B."/>
            <person name="Poustka A."/>
            <person name="Wiemann S."/>
            <person name="Schupp I."/>
        </authorList>
    </citation>
    <scope>NUCLEOTIDE SEQUENCE [LARGE SCALE MRNA] (ISOFORM 2)</scope>
    <source>
        <tissue>Endometrium</tissue>
    </source>
</reference>
<reference key="3">
    <citation type="journal article" date="2004" name="Genome Res.">
        <title>The status, quality, and expansion of the NIH full-length cDNA project: the Mammalian Gene Collection (MGC).</title>
        <authorList>
            <consortium name="The MGC Project Team"/>
        </authorList>
    </citation>
    <scope>NUCLEOTIDE SEQUENCE [LARGE SCALE MRNA] (ISOFORM 1)</scope>
    <source>
        <tissue>Brain</tissue>
    </source>
</reference>
<reference key="4">
    <citation type="journal article" date="2008" name="J. Proteome Res.">
        <title>Phosphoproteome of resting human platelets.</title>
        <authorList>
            <person name="Zahedi R.P."/>
            <person name="Lewandrowski U."/>
            <person name="Wiesner J."/>
            <person name="Wortelkamp S."/>
            <person name="Moebius J."/>
            <person name="Schuetz C."/>
            <person name="Walter U."/>
            <person name="Gambaryan S."/>
            <person name="Sickmann A."/>
        </authorList>
    </citation>
    <scope>IDENTIFICATION BY MASS SPECTROMETRY [LARGE SCALE ANALYSIS]</scope>
    <source>
        <tissue>Platelet</tissue>
    </source>
</reference>
<reference key="5">
    <citation type="journal article" date="2008" name="Proc. Natl. Acad. Sci. U.S.A.">
        <title>A quantitative atlas of mitotic phosphorylation.</title>
        <authorList>
            <person name="Dephoure N."/>
            <person name="Zhou C."/>
            <person name="Villen J."/>
            <person name="Beausoleil S.A."/>
            <person name="Bakalarski C.E."/>
            <person name="Elledge S.J."/>
            <person name="Gygi S.P."/>
        </authorList>
    </citation>
    <scope>PHOSPHORYLATION [LARGE SCALE ANALYSIS] AT SER-70 AND THR-71</scope>
    <scope>IDENTIFICATION BY MASS SPECTROMETRY [LARGE SCALE ANALYSIS]</scope>
    <source>
        <tissue>Cervix carcinoma</tissue>
    </source>
</reference>
<reference key="6">
    <citation type="journal article" date="2009" name="Sci. Signal.">
        <title>Quantitative phosphoproteomic analysis of T cell receptor signaling reveals system-wide modulation of protein-protein interactions.</title>
        <authorList>
            <person name="Mayya V."/>
            <person name="Lundgren D.H."/>
            <person name="Hwang S.-I."/>
            <person name="Rezaul K."/>
            <person name="Wu L."/>
            <person name="Eng J.K."/>
            <person name="Rodionov V."/>
            <person name="Han D.K."/>
        </authorList>
    </citation>
    <scope>PHOSPHORYLATION [LARGE SCALE ANALYSIS] AT SER-70 AND THR-71</scope>
    <scope>IDENTIFICATION BY MASS SPECTROMETRY [LARGE SCALE ANALYSIS]</scope>
    <source>
        <tissue>Leukemic T-cell</tissue>
    </source>
</reference>
<reference key="7">
    <citation type="journal article" date="2011" name="BMC Syst. Biol.">
        <title>Initial characterization of the human central proteome.</title>
        <authorList>
            <person name="Burkard T.R."/>
            <person name="Planyavsky M."/>
            <person name="Kaupe I."/>
            <person name="Breitwieser F.P."/>
            <person name="Buerckstuemmer T."/>
            <person name="Bennett K.L."/>
            <person name="Superti-Furga G."/>
            <person name="Colinge J."/>
        </authorList>
    </citation>
    <scope>IDENTIFICATION BY MASS SPECTROMETRY [LARGE SCALE ANALYSIS]</scope>
</reference>
<reference key="8">
    <citation type="journal article" date="2012" name="Proc. Natl. Acad. Sci. U.S.A.">
        <title>N-terminal acetylome analyses and functional insights of the N-terminal acetyltransferase NatB.</title>
        <authorList>
            <person name="Van Damme P."/>
            <person name="Lasa M."/>
            <person name="Polevoda B."/>
            <person name="Gazquez C."/>
            <person name="Elosegui-Artola A."/>
            <person name="Kim D.S."/>
            <person name="De Juan-Pardo E."/>
            <person name="Demeyer K."/>
            <person name="Hole K."/>
            <person name="Larrea E."/>
            <person name="Timmerman E."/>
            <person name="Prieto J."/>
            <person name="Arnesen T."/>
            <person name="Sherman F."/>
            <person name="Gevaert K."/>
            <person name="Aldabe R."/>
        </authorList>
    </citation>
    <scope>ACETYLATION [LARGE SCALE ANALYSIS] AT MET-1</scope>
    <scope>IDENTIFICATION BY MASS SPECTROMETRY [LARGE SCALE ANALYSIS]</scope>
</reference>
<reference key="9">
    <citation type="journal article" date="2014" name="J. Proteomics">
        <title>An enzyme assisted RP-RPLC approach for in-depth analysis of human liver phosphoproteome.</title>
        <authorList>
            <person name="Bian Y."/>
            <person name="Song C."/>
            <person name="Cheng K."/>
            <person name="Dong M."/>
            <person name="Wang F."/>
            <person name="Huang J."/>
            <person name="Sun D."/>
            <person name="Wang L."/>
            <person name="Ye M."/>
            <person name="Zou H."/>
        </authorList>
    </citation>
    <scope>IDENTIFICATION BY MASS SPECTROMETRY [LARGE SCALE ANALYSIS]</scope>
    <source>
        <tissue>Liver</tissue>
    </source>
</reference>
<proteinExistence type="evidence at protein level"/>
<feature type="chain" id="PRO_0000089885" description="Protein FAM177A1">
    <location>
        <begin position="1"/>
        <end position="213"/>
    </location>
</feature>
<feature type="region of interest" description="Disordered" evidence="2">
    <location>
        <begin position="147"/>
        <end position="175"/>
    </location>
</feature>
<feature type="coiled-coil region" evidence="1">
    <location>
        <begin position="136"/>
        <end position="173"/>
    </location>
</feature>
<feature type="compositionally biased region" description="Polar residues" evidence="2">
    <location>
        <begin position="162"/>
        <end position="175"/>
    </location>
</feature>
<feature type="modified residue" description="N-acetylmethionine" evidence="7">
    <location>
        <position position="1"/>
    </location>
</feature>
<feature type="modified residue" description="Phosphoserine" evidence="5 6">
    <location>
        <position position="70"/>
    </location>
</feature>
<feature type="modified residue" description="Phosphothreonine" evidence="5 6">
    <location>
        <position position="71"/>
    </location>
</feature>
<feature type="splice variant" id="VSP_038223" description="In isoform 2." evidence="3">
    <original>M</original>
    <variation>MEVGLPAITLFLTSASSPVVATTM</variation>
    <location>
        <position position="1"/>
    </location>
</feature>
<feature type="sequence conflict" description="In Ref. 2; CAH18656." evidence="4" ref="2">
    <original>A</original>
    <variation>V</variation>
    <location>
        <position position="22"/>
    </location>
</feature>
<feature type="sequence conflict" description="In Ref. 2; CAH18656." evidence="4" ref="2">
    <original>I</original>
    <variation>M</variation>
    <location>
        <position position="47"/>
    </location>
</feature>
<feature type="sequence conflict" description="In Ref. 2; CAH18656." evidence="4" ref="2">
    <original>R</original>
    <variation>I</variation>
    <location>
        <position position="56"/>
    </location>
</feature>
<feature type="sequence conflict" description="In Ref. 2; CAH18656." evidence="4" ref="2">
    <original>S</original>
    <variation>I</variation>
    <location>
        <position position="62"/>
    </location>
</feature>
<evidence type="ECO:0000255" key="1"/>
<evidence type="ECO:0000256" key="2">
    <source>
        <dbReference type="SAM" id="MobiDB-lite"/>
    </source>
</evidence>
<evidence type="ECO:0000303" key="3">
    <source>
    </source>
</evidence>
<evidence type="ECO:0000305" key="4"/>
<evidence type="ECO:0007744" key="5">
    <source>
    </source>
</evidence>
<evidence type="ECO:0007744" key="6">
    <source>
    </source>
</evidence>
<evidence type="ECO:0007744" key="7">
    <source>
    </source>
</evidence>
<comment type="interaction">
    <interactant intactId="EBI-12201693">
        <id>Q8N128-2</id>
    </interactant>
    <interactant intactId="EBI-13059134">
        <id>Q13520</id>
        <label>AQP6</label>
    </interactant>
    <organismsDiffer>false</organismsDiffer>
    <experiments>3</experiments>
</comment>
<comment type="interaction">
    <interactant intactId="EBI-12201693">
        <id>Q8N128-2</id>
    </interactant>
    <interactant intactId="EBI-718729">
        <id>P55212</id>
        <label>CASP6</label>
    </interactant>
    <organismsDiffer>false</organismsDiffer>
    <experiments>3</experiments>
</comment>
<comment type="interaction">
    <interactant intactId="EBI-12201693">
        <id>Q8N128-2</id>
    </interactant>
    <interactant intactId="EBI-10962476">
        <id>Q9P2X0-2</id>
        <label>DPM3</label>
    </interactant>
    <organismsDiffer>false</organismsDiffer>
    <experiments>3</experiments>
</comment>
<comment type="interaction">
    <interactant intactId="EBI-12201693">
        <id>Q8N128-2</id>
    </interactant>
    <interactant intactId="EBI-18535450">
        <id>Q9GZR5</id>
        <label>ELOVL4</label>
    </interactant>
    <organismsDiffer>false</organismsDiffer>
    <experiments>3</experiments>
</comment>
<comment type="interaction">
    <interactant intactId="EBI-12201693">
        <id>Q8N128-2</id>
    </interactant>
    <interactant intactId="EBI-743099">
        <id>Q969F0</id>
        <label>FATE1</label>
    </interactant>
    <organismsDiffer>false</organismsDiffer>
    <experiments>3</experiments>
</comment>
<comment type="interaction">
    <interactant intactId="EBI-12201693">
        <id>Q8N128-2</id>
    </interactant>
    <interactant intactId="EBI-10266796">
        <id>Q8N5M9</id>
        <label>JAGN1</label>
    </interactant>
    <organismsDiffer>false</organismsDiffer>
    <experiments>3</experiments>
</comment>
<comment type="interaction">
    <interactant intactId="EBI-12201693">
        <id>Q8N128-2</id>
    </interactant>
    <interactant intactId="EBI-21591415">
        <id>P13473-2</id>
        <label>LAMP2</label>
    </interactant>
    <organismsDiffer>false</organismsDiffer>
    <experiments>3</experiments>
</comment>
<comment type="interaction">
    <interactant intactId="EBI-12201693">
        <id>Q8N128-2</id>
    </interactant>
    <interactant intactId="EBI-741171">
        <id>Q96AL5</id>
        <label>PBX3</label>
    </interactant>
    <organismsDiffer>false</organismsDiffer>
    <experiments>3</experiments>
</comment>
<comment type="interaction">
    <interactant intactId="EBI-12201693">
        <id>Q8N128-2</id>
    </interactant>
    <interactant intactId="EBI-1046170">
        <id>O95470</id>
        <label>SGPL1</label>
    </interactant>
    <organismsDiffer>false</organismsDiffer>
    <experiments>3</experiments>
</comment>
<comment type="interaction">
    <interactant intactId="EBI-12201693">
        <id>Q8N128-2</id>
    </interactant>
    <interactant intactId="EBI-2623095">
        <id>Q9Y371</id>
        <label>SH3GLB1</label>
    </interactant>
    <organismsDiffer>false</organismsDiffer>
    <experiments>3</experiments>
</comment>
<comment type="interaction">
    <interactant intactId="EBI-12201693">
        <id>Q8N128-2</id>
    </interactant>
    <interactant intactId="EBI-6447886">
        <id>Q9Y320</id>
        <label>TMX2</label>
    </interactant>
    <organismsDiffer>false</organismsDiffer>
    <experiments>3</experiments>
</comment>
<comment type="alternative products">
    <event type="alternative splicing"/>
    <isoform>
        <id>Q8N128-1</id>
        <name>1</name>
        <sequence type="displayed"/>
    </isoform>
    <isoform>
        <id>Q8N128-2</id>
        <name>2</name>
        <sequence type="described" ref="VSP_038223"/>
    </isoform>
</comment>
<comment type="similarity">
    <text evidence="4">Belongs to the FAM177 family.</text>
</comment>
<organism>
    <name type="scientific">Homo sapiens</name>
    <name type="common">Human</name>
    <dbReference type="NCBI Taxonomy" id="9606"/>
    <lineage>
        <taxon>Eukaryota</taxon>
        <taxon>Metazoa</taxon>
        <taxon>Chordata</taxon>
        <taxon>Craniata</taxon>
        <taxon>Vertebrata</taxon>
        <taxon>Euteleostomi</taxon>
        <taxon>Mammalia</taxon>
        <taxon>Eutheria</taxon>
        <taxon>Euarchontoglires</taxon>
        <taxon>Primates</taxon>
        <taxon>Haplorrhini</taxon>
        <taxon>Catarrhini</taxon>
        <taxon>Hominidae</taxon>
        <taxon>Homo</taxon>
    </lineage>
</organism>
<dbReference type="EMBL" id="AK096173">
    <property type="protein sequence ID" value="BAC04716.1"/>
    <property type="molecule type" value="mRNA"/>
</dbReference>
<dbReference type="EMBL" id="CR749796">
    <property type="protein sequence ID" value="CAH18656.1"/>
    <property type="molecule type" value="mRNA"/>
</dbReference>
<dbReference type="EMBL" id="BC029559">
    <property type="protein sequence ID" value="AAH29559.1"/>
    <property type="molecule type" value="mRNA"/>
</dbReference>
<dbReference type="CCDS" id="CCDS41944.1">
    <molecule id="Q8N128-1"/>
</dbReference>
<dbReference type="CCDS" id="CCDS9653.2">
    <molecule id="Q8N128-2"/>
</dbReference>
<dbReference type="RefSeq" id="NP_001072987.1">
    <molecule id="Q8N128-1"/>
    <property type="nucleotide sequence ID" value="NM_001079519.1"/>
</dbReference>
<dbReference type="RefSeq" id="NP_001275951.1">
    <molecule id="Q8N128-1"/>
    <property type="nucleotide sequence ID" value="NM_001289022.3"/>
</dbReference>
<dbReference type="RefSeq" id="NP_775878.2">
    <molecule id="Q8N128-2"/>
    <property type="nucleotide sequence ID" value="NM_173607.5"/>
</dbReference>
<dbReference type="SMR" id="Q8N128"/>
<dbReference type="BioGRID" id="129627">
    <property type="interactions" value="57"/>
</dbReference>
<dbReference type="FunCoup" id="Q8N128">
    <property type="interactions" value="468"/>
</dbReference>
<dbReference type="IntAct" id="Q8N128">
    <property type="interactions" value="42"/>
</dbReference>
<dbReference type="MINT" id="Q8N128"/>
<dbReference type="STRING" id="9606.ENSP00000280987"/>
<dbReference type="iPTMnet" id="Q8N128"/>
<dbReference type="PhosphoSitePlus" id="Q8N128"/>
<dbReference type="SwissPalm" id="Q8N128"/>
<dbReference type="BioMuta" id="FAM177A1"/>
<dbReference type="DMDM" id="46395903"/>
<dbReference type="jPOST" id="Q8N128"/>
<dbReference type="MassIVE" id="Q8N128"/>
<dbReference type="PaxDb" id="9606-ENSP00000280987"/>
<dbReference type="PeptideAtlas" id="Q8N128"/>
<dbReference type="ProteomicsDB" id="71528">
    <molecule id="Q8N128-1"/>
</dbReference>
<dbReference type="ProteomicsDB" id="71529">
    <molecule id="Q8N128-2"/>
</dbReference>
<dbReference type="Pumba" id="Q8N128"/>
<dbReference type="Antibodypedia" id="23180">
    <property type="antibodies" value="38 antibodies from 9 providers"/>
</dbReference>
<dbReference type="DNASU" id="283635"/>
<dbReference type="Ensembl" id="ENST00000280987.9">
    <molecule id="Q8N128-2"/>
    <property type="protein sequence ID" value="ENSP00000280987.4"/>
    <property type="gene ID" value="ENSG00000151327.14"/>
</dbReference>
<dbReference type="Ensembl" id="ENST00000382406.7">
    <molecule id="Q8N128-1"/>
    <property type="protein sequence ID" value="ENSP00000371843.3"/>
    <property type="gene ID" value="ENSG00000151327.14"/>
</dbReference>
<dbReference type="Ensembl" id="ENST00000555211.6">
    <molecule id="Q8N128-1"/>
    <property type="protein sequence ID" value="ENSP00000451508.2"/>
    <property type="gene ID" value="ENSG00000151327.14"/>
</dbReference>
<dbReference type="Ensembl" id="ENST00000699514.1">
    <molecule id="Q8N128-1"/>
    <property type="protein sequence ID" value="ENSP00000514409.1"/>
    <property type="gene ID" value="ENSG00000151327.14"/>
</dbReference>
<dbReference type="Ensembl" id="ENST00000699515.1">
    <molecule id="Q8N128-1"/>
    <property type="protein sequence ID" value="ENSP00000514410.1"/>
    <property type="gene ID" value="ENSG00000151327.14"/>
</dbReference>
<dbReference type="GeneID" id="283635"/>
<dbReference type="KEGG" id="hsa:283635"/>
<dbReference type="MANE-Select" id="ENST00000280987.9">
    <molecule id="Q8N128-2"/>
    <property type="protein sequence ID" value="ENSP00000280987.4"/>
    <property type="RefSeq nucleotide sequence ID" value="NM_173607.5"/>
    <property type="RefSeq protein sequence ID" value="NP_775878.2"/>
</dbReference>
<dbReference type="UCSC" id="uc001wsp.4">
    <molecule id="Q8N128-1"/>
    <property type="organism name" value="human"/>
</dbReference>
<dbReference type="AGR" id="HGNC:19829"/>
<dbReference type="CTD" id="283635"/>
<dbReference type="DisGeNET" id="283635"/>
<dbReference type="GeneCards" id="FAM177A1"/>
<dbReference type="HGNC" id="HGNC:19829">
    <property type="gene designation" value="FAM177A1"/>
</dbReference>
<dbReference type="HPA" id="ENSG00000151327">
    <property type="expression patterns" value="Low tissue specificity"/>
</dbReference>
<dbReference type="MalaCards" id="FAM177A1"/>
<dbReference type="MIM" id="619181">
    <property type="type" value="gene"/>
</dbReference>
<dbReference type="neXtProt" id="NX_Q8N128"/>
<dbReference type="OpenTargets" id="ENSG00000151327"/>
<dbReference type="PharmGKB" id="PA162387378"/>
<dbReference type="VEuPathDB" id="HostDB:ENSG00000151327"/>
<dbReference type="eggNOG" id="ENOG502RYW3">
    <property type="taxonomic scope" value="Eukaryota"/>
</dbReference>
<dbReference type="GeneTree" id="ENSGT00390000016736"/>
<dbReference type="HOGENOM" id="CLU_081605_0_0_1"/>
<dbReference type="InParanoid" id="Q8N128"/>
<dbReference type="OMA" id="TACAMDQ"/>
<dbReference type="OrthoDB" id="45963at2759"/>
<dbReference type="PAN-GO" id="Q8N128">
    <property type="GO annotations" value="0 GO annotations based on evolutionary models"/>
</dbReference>
<dbReference type="PhylomeDB" id="Q8N128"/>
<dbReference type="TreeFam" id="TF326916"/>
<dbReference type="PathwayCommons" id="Q8N128"/>
<dbReference type="SignaLink" id="Q8N128"/>
<dbReference type="BioGRID-ORCS" id="283635">
    <property type="hits" value="17 hits in 1159 CRISPR screens"/>
</dbReference>
<dbReference type="ChiTaRS" id="FAM177A1">
    <property type="organism name" value="human"/>
</dbReference>
<dbReference type="GenomeRNAi" id="283635"/>
<dbReference type="Pharos" id="Q8N128">
    <property type="development level" value="Tdark"/>
</dbReference>
<dbReference type="PRO" id="PR:Q8N128"/>
<dbReference type="Proteomes" id="UP000005640">
    <property type="component" value="Chromosome 14"/>
</dbReference>
<dbReference type="RNAct" id="Q8N128">
    <property type="molecule type" value="protein"/>
</dbReference>
<dbReference type="Bgee" id="ENSG00000151327">
    <property type="expression patterns" value="Expressed in calcaneal tendon and 181 other cell types or tissues"/>
</dbReference>
<dbReference type="ExpressionAtlas" id="Q8N128">
    <property type="expression patterns" value="baseline and differential"/>
</dbReference>
<dbReference type="InterPro" id="IPR028260">
    <property type="entry name" value="FAM177"/>
</dbReference>
<dbReference type="PANTHER" id="PTHR31206">
    <property type="entry name" value="LP10445P"/>
    <property type="match status" value="1"/>
</dbReference>
<dbReference type="PANTHER" id="PTHR31206:SF5">
    <property type="entry name" value="PROTEIN FAM177A1"/>
    <property type="match status" value="1"/>
</dbReference>
<dbReference type="Pfam" id="PF14774">
    <property type="entry name" value="FAM177"/>
    <property type="match status" value="1"/>
</dbReference>
<sequence>MDQEPVGGVERGEAVAASGAAAAAAFGESAGQMSNERGFENVELGVIGKKKKVPRRVIHFVSGETMEEYSTDEDEVDGLEKKDVLPTVDPTKLTWGPYLWFYMLRAATSTLSVCDFLGEKIASVLGISTPKYQYAIDEYYRMKKEEEEEEEENRMSEEAEKQYQQNKLQTDSIVQTDQPETVISSSFVNVNFEMEGDSEVIMESKQNPVSVPP</sequence>
<keyword id="KW-0007">Acetylation</keyword>
<keyword id="KW-0025">Alternative splicing</keyword>
<keyword id="KW-0175">Coiled coil</keyword>
<keyword id="KW-0597">Phosphoprotein</keyword>
<keyword id="KW-1267">Proteomics identification</keyword>
<keyword id="KW-1185">Reference proteome</keyword>
<name>F177A_HUMAN</name>
<protein>
    <recommendedName>
        <fullName>Protein FAM177A1</fullName>
    </recommendedName>
</protein>
<accession>Q8N128</accession>
<accession>Q68CT2</accession>
<gene>
    <name type="primary">FAM177A1</name>
    <name type="synonym">C14orf24</name>
</gene>